<proteinExistence type="inferred from homology"/>
<reference key="1">
    <citation type="submission" date="2007-08" db="EMBL/GenBank/DDBJ databases">
        <authorList>
            <consortium name="The Vibrio harveyi Genome Sequencing Project"/>
            <person name="Bassler B."/>
            <person name="Clifton S.W."/>
            <person name="Fulton L."/>
            <person name="Delehaunty K."/>
            <person name="Fronick C."/>
            <person name="Harrison M."/>
            <person name="Markivic C."/>
            <person name="Fulton R."/>
            <person name="Tin-Wollam A.-M."/>
            <person name="Shah N."/>
            <person name="Pepin K."/>
            <person name="Nash W."/>
            <person name="Thiruvilangam P."/>
            <person name="Bhonagiri V."/>
            <person name="Waters C."/>
            <person name="Tu K.C."/>
            <person name="Irgon J."/>
            <person name="Wilson R.K."/>
        </authorList>
    </citation>
    <scope>NUCLEOTIDE SEQUENCE [LARGE SCALE GENOMIC DNA]</scope>
    <source>
        <strain>ATCC BAA-1116 / BB120</strain>
    </source>
</reference>
<dbReference type="EC" id="2.1.3.-" evidence="1"/>
<dbReference type="EMBL" id="CP000789">
    <property type="protein sequence ID" value="ABU70565.1"/>
    <property type="molecule type" value="Genomic_DNA"/>
</dbReference>
<dbReference type="RefSeq" id="WP_005426299.1">
    <property type="nucleotide sequence ID" value="NC_022269.1"/>
</dbReference>
<dbReference type="SMR" id="A7N1I9"/>
<dbReference type="GeneID" id="83582342"/>
<dbReference type="KEGG" id="vha:VIBHAR_01595"/>
<dbReference type="PATRIC" id="fig|338187.25.peg.1067"/>
<dbReference type="Proteomes" id="UP000008152">
    <property type="component" value="Chromosome I"/>
</dbReference>
<dbReference type="GO" id="GO:0016743">
    <property type="term" value="F:carboxyl- or carbamoyltransferase activity"/>
    <property type="evidence" value="ECO:0007669"/>
    <property type="project" value="UniProtKB-UniRule"/>
</dbReference>
<dbReference type="GO" id="GO:1904047">
    <property type="term" value="F:S-adenosyl-L-methionine binding"/>
    <property type="evidence" value="ECO:0007669"/>
    <property type="project" value="UniProtKB-UniRule"/>
</dbReference>
<dbReference type="GO" id="GO:0002098">
    <property type="term" value="P:tRNA wobble uridine modification"/>
    <property type="evidence" value="ECO:0007669"/>
    <property type="project" value="InterPro"/>
</dbReference>
<dbReference type="CDD" id="cd02440">
    <property type="entry name" value="AdoMet_MTases"/>
    <property type="match status" value="1"/>
</dbReference>
<dbReference type="Gene3D" id="3.40.50.150">
    <property type="entry name" value="Vaccinia Virus protein VP39"/>
    <property type="match status" value="1"/>
</dbReference>
<dbReference type="HAMAP" id="MF_01589">
    <property type="entry name" value="Cx_SAM_synthase"/>
    <property type="match status" value="1"/>
</dbReference>
<dbReference type="InterPro" id="IPR005271">
    <property type="entry name" value="CmoA"/>
</dbReference>
<dbReference type="InterPro" id="IPR041698">
    <property type="entry name" value="Methyltransf_25"/>
</dbReference>
<dbReference type="InterPro" id="IPR029063">
    <property type="entry name" value="SAM-dependent_MTases_sf"/>
</dbReference>
<dbReference type="NCBIfam" id="TIGR00740">
    <property type="entry name" value="carboxy-S-adenosyl-L-methionine synthase CmoA"/>
    <property type="match status" value="1"/>
</dbReference>
<dbReference type="NCBIfam" id="NF011995">
    <property type="entry name" value="PRK15451.1"/>
    <property type="match status" value="1"/>
</dbReference>
<dbReference type="PANTHER" id="PTHR43861:SF2">
    <property type="entry name" value="CARBOXY-S-ADENOSYL-L-METHIONINE SYNTHASE"/>
    <property type="match status" value="1"/>
</dbReference>
<dbReference type="PANTHER" id="PTHR43861">
    <property type="entry name" value="TRANS-ACONITATE 2-METHYLTRANSFERASE-RELATED"/>
    <property type="match status" value="1"/>
</dbReference>
<dbReference type="Pfam" id="PF13649">
    <property type="entry name" value="Methyltransf_25"/>
    <property type="match status" value="1"/>
</dbReference>
<dbReference type="PIRSF" id="PIRSF006325">
    <property type="entry name" value="MeTrfase_bac"/>
    <property type="match status" value="1"/>
</dbReference>
<dbReference type="SUPFAM" id="SSF53335">
    <property type="entry name" value="S-adenosyl-L-methionine-dependent methyltransferases"/>
    <property type="match status" value="1"/>
</dbReference>
<feature type="chain" id="PRO_0000314400" description="Carboxy-S-adenosyl-L-methionine synthase">
    <location>
        <begin position="1"/>
        <end position="245"/>
    </location>
</feature>
<feature type="binding site" evidence="1">
    <location>
        <position position="42"/>
    </location>
    <ligand>
        <name>S-adenosyl-L-methionine</name>
        <dbReference type="ChEBI" id="CHEBI:59789"/>
    </ligand>
</feature>
<feature type="binding site" evidence="1">
    <location>
        <begin position="67"/>
        <end position="69"/>
    </location>
    <ligand>
        <name>S-adenosyl-L-methionine</name>
        <dbReference type="ChEBI" id="CHEBI:59789"/>
    </ligand>
</feature>
<feature type="binding site" evidence="1">
    <location>
        <begin position="92"/>
        <end position="93"/>
    </location>
    <ligand>
        <name>S-adenosyl-L-methionine</name>
        <dbReference type="ChEBI" id="CHEBI:59789"/>
    </ligand>
</feature>
<feature type="binding site" evidence="1">
    <location>
        <begin position="120"/>
        <end position="121"/>
    </location>
    <ligand>
        <name>S-adenosyl-L-methionine</name>
        <dbReference type="ChEBI" id="CHEBI:59789"/>
    </ligand>
</feature>
<feature type="binding site" evidence="1">
    <location>
        <position position="135"/>
    </location>
    <ligand>
        <name>S-adenosyl-L-methionine</name>
        <dbReference type="ChEBI" id="CHEBI:59789"/>
    </ligand>
</feature>
<feature type="binding site" evidence="1">
    <location>
        <position position="202"/>
    </location>
    <ligand>
        <name>S-adenosyl-L-methionine</name>
        <dbReference type="ChEBI" id="CHEBI:59789"/>
    </ligand>
</feature>
<keyword id="KW-0949">S-adenosyl-L-methionine</keyword>
<keyword id="KW-0808">Transferase</keyword>
<evidence type="ECO:0000255" key="1">
    <source>
        <dbReference type="HAMAP-Rule" id="MF_01589"/>
    </source>
</evidence>
<name>CMOA_VIBC1</name>
<accession>A7N1I9</accession>
<comment type="function">
    <text evidence="1">Catalyzes the conversion of S-adenosyl-L-methionine (SAM) to carboxy-S-adenosyl-L-methionine (Cx-SAM).</text>
</comment>
<comment type="catalytic activity">
    <reaction evidence="1">
        <text>prephenate + S-adenosyl-L-methionine = carboxy-S-adenosyl-L-methionine + 3-phenylpyruvate + H2O</text>
        <dbReference type="Rhea" id="RHEA:51692"/>
        <dbReference type="ChEBI" id="CHEBI:15377"/>
        <dbReference type="ChEBI" id="CHEBI:18005"/>
        <dbReference type="ChEBI" id="CHEBI:29934"/>
        <dbReference type="ChEBI" id="CHEBI:59789"/>
        <dbReference type="ChEBI" id="CHEBI:134278"/>
    </reaction>
</comment>
<comment type="subunit">
    <text evidence="1">Homodimer.</text>
</comment>
<comment type="similarity">
    <text evidence="1">Belongs to the class I-like SAM-binding methyltransferase superfamily. Cx-SAM synthase family.</text>
</comment>
<sequence>MNPKSNPDTIFSAPIDKIGDFTFDERVAEVFPDMIQRSVPGYSNIISAIGMLAERFVKPHSNIYDLGCSLGAATLSMRRHIKQEGCQIIAVDNSPAMVERCKLHVNAYRSDTPVDVVEADIRNIEIENASVVVLNFTLQFLSPEDRYALLEKIYAGLRPGGILILSEKFVFEDEVSNELLIDLHHDFKRANGYSELEISQKRSAIENVMRPDSKKDHKERFAEIGFSSYDVWFQCFNFGSMFAIK</sequence>
<gene>
    <name evidence="1" type="primary">cmoA</name>
    <name type="ordered locus">VIBHAR_01595</name>
</gene>
<organism>
    <name type="scientific">Vibrio campbellii (strain ATCC BAA-1116)</name>
    <dbReference type="NCBI Taxonomy" id="2902295"/>
    <lineage>
        <taxon>Bacteria</taxon>
        <taxon>Pseudomonadati</taxon>
        <taxon>Pseudomonadota</taxon>
        <taxon>Gammaproteobacteria</taxon>
        <taxon>Vibrionales</taxon>
        <taxon>Vibrionaceae</taxon>
        <taxon>Vibrio</taxon>
    </lineage>
</organism>
<protein>
    <recommendedName>
        <fullName evidence="1">Carboxy-S-adenosyl-L-methionine synthase</fullName>
        <shortName evidence="1">Cx-SAM synthase</shortName>
        <ecNumber evidence="1">2.1.3.-</ecNumber>
    </recommendedName>
</protein>